<sequence length="297" mass="34563">MSKVSDLYDVTWEDMRDKMKTWREDNYRNSEQIVDVGEELINEHASKLGDDVWIIYEQVMIAALDCGRDDIAMSCLQELRRQFPGSHRVKRLTGLRFEAMERYDDALQIYDRILQDDPTNTATRKRKIAIRKAQGRNAEAIRELNEYLEQFVGDQEAWHELAELYINELDYAKAAFCLEELILTNPHNHFYYQQFAEVKYTQGGLENLELSRKYFSQALKLNNHSMRALFGLYMSSVHIASNPKASAKMKKDNVKYATWATSQIKKAYQLAGRTMTDTQTSLKAVEDMLETLQITPS</sequence>
<dbReference type="EMBL" id="BC041255">
    <property type="protein sequence ID" value="AAH41255.1"/>
    <property type="molecule type" value="mRNA"/>
</dbReference>
<dbReference type="RefSeq" id="NP_001080754.1">
    <property type="nucleotide sequence ID" value="NM_001087285.1"/>
</dbReference>
<dbReference type="SMR" id="Q8AVU9"/>
<dbReference type="DNASU" id="380446"/>
<dbReference type="GeneID" id="380446"/>
<dbReference type="KEGG" id="xla:380446"/>
<dbReference type="AGR" id="Xenbase:XB-GENE-6253619"/>
<dbReference type="CTD" id="380446"/>
<dbReference type="Xenbase" id="XB-GENE-6253619">
    <property type="gene designation" value="emc2.S"/>
</dbReference>
<dbReference type="OMA" id="TNYKTAR"/>
<dbReference type="OrthoDB" id="124397at2759"/>
<dbReference type="Proteomes" id="UP000186698">
    <property type="component" value="Chromosome 6S"/>
</dbReference>
<dbReference type="Bgee" id="380446">
    <property type="expression patterns" value="Expressed in muscle tissue and 19 other cell types or tissues"/>
</dbReference>
<dbReference type="GO" id="GO:0005737">
    <property type="term" value="C:cytoplasm"/>
    <property type="evidence" value="ECO:0000250"/>
    <property type="project" value="UniProtKB"/>
</dbReference>
<dbReference type="GO" id="GO:0072546">
    <property type="term" value="C:EMC complex"/>
    <property type="evidence" value="ECO:0000250"/>
    <property type="project" value="UniProtKB"/>
</dbReference>
<dbReference type="GO" id="GO:0005783">
    <property type="term" value="C:endoplasmic reticulum"/>
    <property type="evidence" value="ECO:0000250"/>
    <property type="project" value="UniProtKB"/>
</dbReference>
<dbReference type="GO" id="GO:0005789">
    <property type="term" value="C:endoplasmic reticulum membrane"/>
    <property type="evidence" value="ECO:0000250"/>
    <property type="project" value="UniProtKB"/>
</dbReference>
<dbReference type="GO" id="GO:0042406">
    <property type="term" value="C:extrinsic component of endoplasmic reticulum membrane"/>
    <property type="evidence" value="ECO:0000250"/>
    <property type="project" value="UniProtKB"/>
</dbReference>
<dbReference type="GO" id="GO:0045050">
    <property type="term" value="P:protein insertion into ER membrane by stop-transfer membrane-anchor sequence"/>
    <property type="evidence" value="ECO:0000250"/>
    <property type="project" value="UniProtKB"/>
</dbReference>
<dbReference type="GO" id="GO:0071816">
    <property type="term" value="P:tail-anchored membrane protein insertion into ER membrane"/>
    <property type="evidence" value="ECO:0000250"/>
    <property type="project" value="UniProtKB"/>
</dbReference>
<dbReference type="FunFam" id="1.25.40.10:FF:000074">
    <property type="entry name" value="ER membrane protein complex subunit 2"/>
    <property type="match status" value="1"/>
</dbReference>
<dbReference type="Gene3D" id="1.25.40.10">
    <property type="entry name" value="Tetratricopeptide repeat domain"/>
    <property type="match status" value="1"/>
</dbReference>
<dbReference type="InterPro" id="IPR039856">
    <property type="entry name" value="EMC2-like"/>
</dbReference>
<dbReference type="InterPro" id="IPR011990">
    <property type="entry name" value="TPR-like_helical_dom_sf"/>
</dbReference>
<dbReference type="InterPro" id="IPR055217">
    <property type="entry name" value="TPR_EMC2"/>
</dbReference>
<dbReference type="InterPro" id="IPR019734">
    <property type="entry name" value="TPR_rpt"/>
</dbReference>
<dbReference type="PANTHER" id="PTHR12760">
    <property type="entry name" value="TETRATRICOPEPTIDE REPEAT PROTEIN"/>
    <property type="match status" value="1"/>
</dbReference>
<dbReference type="Pfam" id="PF22890">
    <property type="entry name" value="TPR_EMC2"/>
    <property type="match status" value="1"/>
</dbReference>
<dbReference type="SUPFAM" id="SSF48452">
    <property type="entry name" value="TPR-like"/>
    <property type="match status" value="1"/>
</dbReference>
<dbReference type="PROSITE" id="PS50005">
    <property type="entry name" value="TPR"/>
    <property type="match status" value="2"/>
</dbReference>
<dbReference type="PROSITE" id="PS50293">
    <property type="entry name" value="TPR_REGION"/>
    <property type="match status" value="1"/>
</dbReference>
<name>EMC2B_XENLA</name>
<accession>Q8AVU9</accession>
<comment type="function">
    <text evidence="1">Part of the endoplasmic reticulum membrane protein complex (EMC) that enables the energy-independent insertion into endoplasmic reticulum membranes of newly synthesized membrane proteins. Preferentially accommodates proteins with transmembrane domains that are weakly hydrophobic or contain destabilizing features such as charged and aromatic residues. Involved in the cotranslational insertion of multi-pass membrane proteins in which stop-transfer membrane-anchor sequences become ER membrane spanning helices. It is also required for the post-translational insertion of tail-anchored/TA proteins in endoplasmic reticulum membranes. By mediating the proper cotranslational insertion of N-terminal transmembrane domains in an N-exo topology, with translocated N-terminus in the lumen of the ER, controls the topology of multi-pass membrane proteins. By regulating the insertion of various proteins in membranes, it is indirectly involved in many cellular processes.</text>
</comment>
<comment type="subunit">
    <text evidence="1">Component of the ER membrane protein complex (EMC).</text>
</comment>
<comment type="subcellular location">
    <subcellularLocation>
        <location evidence="1">Endoplasmic reticulum membrane</location>
        <topology evidence="1">Peripheral membrane protein</topology>
        <orientation evidence="1">Cytoplasmic side</orientation>
    </subcellularLocation>
</comment>
<comment type="similarity">
    <text evidence="3">Belongs to the EMC2 family.</text>
</comment>
<feature type="chain" id="PRO_0000333734" description="ER membrane protein complex subunit 2-B">
    <location>
        <begin position="1"/>
        <end position="297"/>
    </location>
</feature>
<feature type="repeat" description="TPR 1" evidence="2">
    <location>
        <begin position="87"/>
        <end position="120"/>
    </location>
</feature>
<feature type="repeat" description="TPR 2" evidence="2">
    <location>
        <begin position="155"/>
        <end position="188"/>
    </location>
</feature>
<feature type="repeat" description="TPR 3" evidence="2">
    <location>
        <begin position="192"/>
        <end position="225"/>
    </location>
</feature>
<gene>
    <name type="primary">emc2-b</name>
    <name type="synonym">ttc35-b</name>
</gene>
<protein>
    <recommendedName>
        <fullName evidence="3">ER membrane protein complex subunit 2-B</fullName>
    </recommendedName>
    <alternativeName>
        <fullName>Tetratricopeptide repeat protein 35-B</fullName>
        <shortName>TPR repeat protein 35-B</shortName>
    </alternativeName>
</protein>
<proteinExistence type="evidence at transcript level"/>
<organism>
    <name type="scientific">Xenopus laevis</name>
    <name type="common">African clawed frog</name>
    <dbReference type="NCBI Taxonomy" id="8355"/>
    <lineage>
        <taxon>Eukaryota</taxon>
        <taxon>Metazoa</taxon>
        <taxon>Chordata</taxon>
        <taxon>Craniata</taxon>
        <taxon>Vertebrata</taxon>
        <taxon>Euteleostomi</taxon>
        <taxon>Amphibia</taxon>
        <taxon>Batrachia</taxon>
        <taxon>Anura</taxon>
        <taxon>Pipoidea</taxon>
        <taxon>Pipidae</taxon>
        <taxon>Xenopodinae</taxon>
        <taxon>Xenopus</taxon>
        <taxon>Xenopus</taxon>
    </lineage>
</organism>
<evidence type="ECO:0000250" key="1">
    <source>
        <dbReference type="UniProtKB" id="Q15006"/>
    </source>
</evidence>
<evidence type="ECO:0000255" key="2"/>
<evidence type="ECO:0000305" key="3"/>
<reference key="1">
    <citation type="submission" date="2002-12" db="EMBL/GenBank/DDBJ databases">
        <authorList>
            <consortium name="NIH - Xenopus Gene Collection (XGC) project"/>
        </authorList>
    </citation>
    <scope>NUCLEOTIDE SEQUENCE [LARGE SCALE MRNA]</scope>
    <source>
        <tissue>Embryo</tissue>
    </source>
</reference>
<keyword id="KW-0256">Endoplasmic reticulum</keyword>
<keyword id="KW-0472">Membrane</keyword>
<keyword id="KW-1185">Reference proteome</keyword>
<keyword id="KW-0677">Repeat</keyword>
<keyword id="KW-0802">TPR repeat</keyword>